<name>PURA_LEIMA</name>
<sequence length="710" mass="78272">MPVRRYGGRYNSSSPGVSNALNPSRTAGWPLSPSPATGSKPASTHHDPVPQEAYYVKDEADARHQQQAPLREPSVEVEVEIIDDEPPRGSQKPLSVAPCTANANNSSGGSKCNAITASRYTFYTNAYQKSVYEALRSLRPLPELQEPRRVKEYAETSLKDSLYRIVEAHDVIMVAGAFFGDEGKGKTVDAVARHPLCTCIARVNSGENAGHTVYDKAGRKFVFNLAPSGLLLPGKRNYIGPECVMDPVSFMEKEVIQLIDAGIDYRDRLFIGNVCIVTPYHKLLDLLGSAANSSTLKGMAPVHGSKVMKRGIRLDHIFNDDETLRKRLEKDMDTYFGLLKVKNLSDADVVRLCREENSDGVVRVPDYVIAFAQAEDKVEFLVKLYRDRVRHNPGFPARCDVTYELHAALLRGEKVLLEGPQSYWLSNARTKFWESTTSADTTAAGLLAASQLNFQKFKSVVLNVHKAPGSSRVGIGACPSSFVPQDYFSAQNIKTLRDLPSATCAHFEAVQRTLFRDGFPHSNDKARHNGIMAPVEYSDETGTYNIGVAMAIASAQHHGECGAVTKKPRVCGFFDCVLHHEVNNIQGPYLTISALDRGDEYDKVGVTIAYVYYSPEGKQVDVNGHVYKNGDIIRAGDPVPSEPALYHCHPIVKLIDGWRDNPIAAAKRRRNAPLPRGVCELLSAIEYFTNCKILSIGNGPNGDDIIYLRQ</sequence>
<dbReference type="EC" id="6.3.4.4" evidence="2"/>
<dbReference type="EMBL" id="FR796409">
    <property type="protein sequence ID" value="CAJ03014.1"/>
    <property type="molecule type" value="Genomic_DNA"/>
</dbReference>
<dbReference type="RefSeq" id="XP_001681863.1">
    <property type="nucleotide sequence ID" value="XM_001681811.1"/>
</dbReference>
<dbReference type="SMR" id="Q4QG35"/>
<dbReference type="FunCoup" id="Q4QG35">
    <property type="interactions" value="396"/>
</dbReference>
<dbReference type="STRING" id="5664.Q4QG35"/>
<dbReference type="EnsemblProtists" id="CAJ03014">
    <property type="protein sequence ID" value="CAJ03014"/>
    <property type="gene ID" value="LMJF_13_1190"/>
</dbReference>
<dbReference type="GeneID" id="5650148"/>
<dbReference type="KEGG" id="lma:LMJF_13_1190"/>
<dbReference type="VEuPathDB" id="TriTrypDB:LmjF.13.1190"/>
<dbReference type="VEuPathDB" id="TriTrypDB:LMJFC_130017500"/>
<dbReference type="VEuPathDB" id="TriTrypDB:LMJLV39_130016100"/>
<dbReference type="VEuPathDB" id="TriTrypDB:LMJSD75_130016100"/>
<dbReference type="eggNOG" id="KOG1355">
    <property type="taxonomic scope" value="Eukaryota"/>
</dbReference>
<dbReference type="InParanoid" id="Q4QG35"/>
<dbReference type="OMA" id="YIGPECV"/>
<dbReference type="UniPathway" id="UPA00075">
    <property type="reaction ID" value="UER00335"/>
</dbReference>
<dbReference type="Proteomes" id="UP000000542">
    <property type="component" value="Chromosome 13"/>
</dbReference>
<dbReference type="GO" id="GO:0097014">
    <property type="term" value="C:ciliary plasm"/>
    <property type="evidence" value="ECO:0000266"/>
    <property type="project" value="GeneDB"/>
</dbReference>
<dbReference type="GO" id="GO:0005737">
    <property type="term" value="C:cytoplasm"/>
    <property type="evidence" value="ECO:0000266"/>
    <property type="project" value="GeneDB"/>
</dbReference>
<dbReference type="GO" id="GO:0004019">
    <property type="term" value="F:adenylosuccinate synthase activity"/>
    <property type="evidence" value="ECO:0000318"/>
    <property type="project" value="GO_Central"/>
</dbReference>
<dbReference type="GO" id="GO:0005525">
    <property type="term" value="F:GTP binding"/>
    <property type="evidence" value="ECO:0007669"/>
    <property type="project" value="UniProtKB-UniRule"/>
</dbReference>
<dbReference type="GO" id="GO:0000287">
    <property type="term" value="F:magnesium ion binding"/>
    <property type="evidence" value="ECO:0007669"/>
    <property type="project" value="UniProtKB-UniRule"/>
</dbReference>
<dbReference type="GO" id="GO:0044208">
    <property type="term" value="P:'de novo' AMP biosynthetic process"/>
    <property type="evidence" value="ECO:0000318"/>
    <property type="project" value="GO_Central"/>
</dbReference>
<dbReference type="GO" id="GO:0046040">
    <property type="term" value="P:IMP metabolic process"/>
    <property type="evidence" value="ECO:0000318"/>
    <property type="project" value="GO_Central"/>
</dbReference>
<dbReference type="FunFam" id="1.10.300.10:FF:000005">
    <property type="entry name" value="Adenylosuccinate synthetase"/>
    <property type="match status" value="1"/>
</dbReference>
<dbReference type="FunFam" id="3.90.170.10:FF:000003">
    <property type="entry name" value="Adenylosuccinate synthetase"/>
    <property type="match status" value="1"/>
</dbReference>
<dbReference type="Gene3D" id="3.40.440.10">
    <property type="entry name" value="Adenylosuccinate Synthetase, subunit A, domain 1"/>
    <property type="match status" value="1"/>
</dbReference>
<dbReference type="Gene3D" id="1.10.300.10">
    <property type="entry name" value="Adenylosuccinate Synthetase, subunit A, domain 2"/>
    <property type="match status" value="1"/>
</dbReference>
<dbReference type="Gene3D" id="3.90.170.10">
    <property type="entry name" value="Adenylosuccinate Synthetase, subunit A, domain 3"/>
    <property type="match status" value="1"/>
</dbReference>
<dbReference type="HAMAP" id="MF_00011">
    <property type="entry name" value="Adenylosucc_synth"/>
    <property type="match status" value="1"/>
</dbReference>
<dbReference type="InterPro" id="IPR018220">
    <property type="entry name" value="Adenylosuccin_syn_GTP-bd"/>
</dbReference>
<dbReference type="InterPro" id="IPR042109">
    <property type="entry name" value="Adenylosuccinate_synth_dom1"/>
</dbReference>
<dbReference type="InterPro" id="IPR042110">
    <property type="entry name" value="Adenylosuccinate_synth_dom2"/>
</dbReference>
<dbReference type="InterPro" id="IPR042111">
    <property type="entry name" value="Adenylosuccinate_synth_dom3"/>
</dbReference>
<dbReference type="InterPro" id="IPR001114">
    <property type="entry name" value="Adenylosuccinate_synthetase"/>
</dbReference>
<dbReference type="InterPro" id="IPR027417">
    <property type="entry name" value="P-loop_NTPase"/>
</dbReference>
<dbReference type="PANTHER" id="PTHR11846">
    <property type="entry name" value="ADENYLOSUCCINATE SYNTHETASE"/>
    <property type="match status" value="1"/>
</dbReference>
<dbReference type="PANTHER" id="PTHR11846:SF0">
    <property type="entry name" value="ADENYLOSUCCINATE SYNTHETASE"/>
    <property type="match status" value="1"/>
</dbReference>
<dbReference type="Pfam" id="PF00709">
    <property type="entry name" value="Adenylsucc_synt"/>
    <property type="match status" value="1"/>
</dbReference>
<dbReference type="SMART" id="SM00788">
    <property type="entry name" value="Adenylsucc_synt"/>
    <property type="match status" value="1"/>
</dbReference>
<dbReference type="SUPFAM" id="SSF52540">
    <property type="entry name" value="P-loop containing nucleoside triphosphate hydrolases"/>
    <property type="match status" value="1"/>
</dbReference>
<dbReference type="PROSITE" id="PS01266">
    <property type="entry name" value="ADENYLOSUCCIN_SYN_1"/>
    <property type="match status" value="1"/>
</dbReference>
<reference key="1">
    <citation type="journal article" date="2005" name="Science">
        <title>The genome of the kinetoplastid parasite, Leishmania major.</title>
        <authorList>
            <person name="Ivens A.C."/>
            <person name="Peacock C.S."/>
            <person name="Worthey E.A."/>
            <person name="Murphy L."/>
            <person name="Aggarwal G."/>
            <person name="Berriman M."/>
            <person name="Sisk E."/>
            <person name="Rajandream M.A."/>
            <person name="Adlem E."/>
            <person name="Aert R."/>
            <person name="Anupama A."/>
            <person name="Apostolou Z."/>
            <person name="Attipoe P."/>
            <person name="Bason N."/>
            <person name="Bauser C."/>
            <person name="Beck A."/>
            <person name="Beverley S.M."/>
            <person name="Bianchettin G."/>
            <person name="Borzym K."/>
            <person name="Bothe G."/>
            <person name="Bruschi C.V."/>
            <person name="Collins M."/>
            <person name="Cadag E."/>
            <person name="Ciarloni L."/>
            <person name="Clayton C."/>
            <person name="Coulson R.M.R."/>
            <person name="Cronin A."/>
            <person name="Cruz A.K."/>
            <person name="Davies R.M."/>
            <person name="De Gaudenzi J."/>
            <person name="Dobson D.E."/>
            <person name="Duesterhoeft A."/>
            <person name="Fazelina G."/>
            <person name="Fosker N."/>
            <person name="Frasch A.C."/>
            <person name="Fraser A."/>
            <person name="Fuchs M."/>
            <person name="Gabel C."/>
            <person name="Goble A."/>
            <person name="Goffeau A."/>
            <person name="Harris D."/>
            <person name="Hertz-Fowler C."/>
            <person name="Hilbert H."/>
            <person name="Horn D."/>
            <person name="Huang Y."/>
            <person name="Klages S."/>
            <person name="Knights A."/>
            <person name="Kube M."/>
            <person name="Larke N."/>
            <person name="Litvin L."/>
            <person name="Lord A."/>
            <person name="Louie T."/>
            <person name="Marra M."/>
            <person name="Masuy D."/>
            <person name="Matthews K."/>
            <person name="Michaeli S."/>
            <person name="Mottram J.C."/>
            <person name="Mueller-Auer S."/>
            <person name="Munden H."/>
            <person name="Nelson S."/>
            <person name="Norbertczak H."/>
            <person name="Oliver K."/>
            <person name="O'neil S."/>
            <person name="Pentony M."/>
            <person name="Pohl T.M."/>
            <person name="Price C."/>
            <person name="Purnelle B."/>
            <person name="Quail M.A."/>
            <person name="Rabbinowitsch E."/>
            <person name="Reinhardt R."/>
            <person name="Rieger M."/>
            <person name="Rinta J."/>
            <person name="Robben J."/>
            <person name="Robertson L."/>
            <person name="Ruiz J.C."/>
            <person name="Rutter S."/>
            <person name="Saunders D."/>
            <person name="Schaefer M."/>
            <person name="Schein J."/>
            <person name="Schwartz D.C."/>
            <person name="Seeger K."/>
            <person name="Seyler A."/>
            <person name="Sharp S."/>
            <person name="Shin H."/>
            <person name="Sivam D."/>
            <person name="Squares R."/>
            <person name="Squares S."/>
            <person name="Tosato V."/>
            <person name="Vogt C."/>
            <person name="Volckaert G."/>
            <person name="Wambutt R."/>
            <person name="Warren T."/>
            <person name="Wedler H."/>
            <person name="Woodward J."/>
            <person name="Zhou S."/>
            <person name="Zimmermann W."/>
            <person name="Smith D.F."/>
            <person name="Blackwell J.M."/>
            <person name="Stuart K.D."/>
            <person name="Barrell B.G."/>
            <person name="Myler P.J."/>
        </authorList>
    </citation>
    <scope>NUCLEOTIDE SEQUENCE [LARGE SCALE GENOMIC DNA]</scope>
    <source>
        <strain>MHOM/IL/81/Friedlin</strain>
    </source>
</reference>
<proteinExistence type="inferred from homology"/>
<protein>
    <recommendedName>
        <fullName evidence="2">Adenylosuccinate synthetase</fullName>
        <shortName evidence="2">AMPSase</shortName>
        <shortName evidence="2">AdSS</shortName>
        <ecNumber evidence="2">6.3.4.4</ecNumber>
    </recommendedName>
    <alternativeName>
        <fullName evidence="2">IMP--aspartate ligase</fullName>
    </alternativeName>
</protein>
<feature type="chain" id="PRO_0000399304" description="Adenylosuccinate synthetase">
    <location>
        <begin position="1"/>
        <end position="710"/>
    </location>
</feature>
<feature type="region of interest" description="Disordered" evidence="3">
    <location>
        <begin position="1"/>
        <end position="54"/>
    </location>
</feature>
<feature type="compositionally biased region" description="Polar residues" evidence="3">
    <location>
        <begin position="10"/>
        <end position="25"/>
    </location>
</feature>
<feature type="compositionally biased region" description="Basic and acidic residues" evidence="3">
    <location>
        <begin position="44"/>
        <end position="54"/>
    </location>
</feature>
<feature type="active site" description="Proton acceptor" evidence="2">
    <location>
        <position position="181"/>
    </location>
</feature>
<feature type="active site" description="Proton donor" evidence="2">
    <location>
        <position position="211"/>
    </location>
</feature>
<feature type="binding site" evidence="2">
    <location>
        <begin position="180"/>
        <end position="186"/>
    </location>
    <ligand>
        <name>GTP</name>
        <dbReference type="ChEBI" id="CHEBI:37565"/>
    </ligand>
</feature>
<feature type="binding site" description="in other chain" evidence="2">
    <location>
        <begin position="181"/>
        <end position="184"/>
    </location>
    <ligand>
        <name>IMP</name>
        <dbReference type="ChEBI" id="CHEBI:58053"/>
        <note>ligand shared between dimeric partners</note>
    </ligand>
</feature>
<feature type="binding site" evidence="2">
    <location>
        <position position="181"/>
    </location>
    <ligand>
        <name>Mg(2+)</name>
        <dbReference type="ChEBI" id="CHEBI:18420"/>
    </ligand>
</feature>
<feature type="binding site" description="in other chain" evidence="2">
    <location>
        <begin position="208"/>
        <end position="211"/>
    </location>
    <ligand>
        <name>IMP</name>
        <dbReference type="ChEBI" id="CHEBI:58053"/>
        <note>ligand shared between dimeric partners</note>
    </ligand>
</feature>
<feature type="binding site" evidence="2">
    <location>
        <begin position="210"/>
        <end position="212"/>
    </location>
    <ligand>
        <name>GTP</name>
        <dbReference type="ChEBI" id="CHEBI:37565"/>
    </ligand>
</feature>
<feature type="binding site" evidence="2">
    <location>
        <position position="210"/>
    </location>
    <ligand>
        <name>Mg(2+)</name>
        <dbReference type="ChEBI" id="CHEBI:18420"/>
    </ligand>
</feature>
<feature type="binding site" description="in other chain" evidence="2">
    <location>
        <position position="295"/>
    </location>
    <ligand>
        <name>IMP</name>
        <dbReference type="ChEBI" id="CHEBI:58053"/>
        <note>ligand shared between dimeric partners</note>
    </ligand>
</feature>
<feature type="binding site" evidence="2">
    <location>
        <position position="309"/>
    </location>
    <ligand>
        <name>IMP</name>
        <dbReference type="ChEBI" id="CHEBI:58053"/>
        <note>ligand shared between dimeric partners</note>
    </ligand>
</feature>
<feature type="binding site" description="in other chain" evidence="2">
    <location>
        <position position="421"/>
    </location>
    <ligand>
        <name>IMP</name>
        <dbReference type="ChEBI" id="CHEBI:58053"/>
        <note>ligand shared between dimeric partners</note>
    </ligand>
</feature>
<feature type="binding site" description="in other chain" evidence="2">
    <location>
        <position position="437"/>
    </location>
    <ligand>
        <name>IMP</name>
        <dbReference type="ChEBI" id="CHEBI:58053"/>
        <note>ligand shared between dimeric partners</note>
    </ligand>
</feature>
<feature type="binding site" evidence="2">
    <location>
        <begin position="563"/>
        <end position="569"/>
    </location>
    <ligand>
        <name>substrate</name>
    </ligand>
</feature>
<feature type="binding site" description="in other chain" evidence="2">
    <location>
        <position position="567"/>
    </location>
    <ligand>
        <name>IMP</name>
        <dbReference type="ChEBI" id="CHEBI:58053"/>
        <note>ligand shared between dimeric partners</note>
    </ligand>
</feature>
<feature type="binding site" evidence="2">
    <location>
        <position position="569"/>
    </location>
    <ligand>
        <name>GTP</name>
        <dbReference type="ChEBI" id="CHEBI:37565"/>
    </ligand>
</feature>
<feature type="binding site" evidence="2">
    <location>
        <begin position="697"/>
        <end position="699"/>
    </location>
    <ligand>
        <name>GTP</name>
        <dbReference type="ChEBI" id="CHEBI:37565"/>
    </ligand>
</feature>
<evidence type="ECO:0000250" key="1"/>
<evidence type="ECO:0000255" key="2">
    <source>
        <dbReference type="HAMAP-Rule" id="MF_03125"/>
    </source>
</evidence>
<evidence type="ECO:0000256" key="3">
    <source>
        <dbReference type="SAM" id="MobiDB-lite"/>
    </source>
</evidence>
<accession>Q4QG35</accession>
<organism>
    <name type="scientific">Leishmania major</name>
    <dbReference type="NCBI Taxonomy" id="5664"/>
    <lineage>
        <taxon>Eukaryota</taxon>
        <taxon>Discoba</taxon>
        <taxon>Euglenozoa</taxon>
        <taxon>Kinetoplastea</taxon>
        <taxon>Metakinetoplastina</taxon>
        <taxon>Trypanosomatida</taxon>
        <taxon>Trypanosomatidae</taxon>
        <taxon>Leishmaniinae</taxon>
        <taxon>Leishmania</taxon>
    </lineage>
</organism>
<comment type="function">
    <text evidence="1">Plays an important role in the salvage pathway for purine nucleotide biosynthesis. Catalyzes the first committed step in the biosynthesis of AMP from IMP (By similarity).</text>
</comment>
<comment type="catalytic activity">
    <reaction evidence="2">
        <text>IMP + L-aspartate + GTP = N(6)-(1,2-dicarboxyethyl)-AMP + GDP + phosphate + 2 H(+)</text>
        <dbReference type="Rhea" id="RHEA:15753"/>
        <dbReference type="ChEBI" id="CHEBI:15378"/>
        <dbReference type="ChEBI" id="CHEBI:29991"/>
        <dbReference type="ChEBI" id="CHEBI:37565"/>
        <dbReference type="ChEBI" id="CHEBI:43474"/>
        <dbReference type="ChEBI" id="CHEBI:57567"/>
        <dbReference type="ChEBI" id="CHEBI:58053"/>
        <dbReference type="ChEBI" id="CHEBI:58189"/>
        <dbReference type="EC" id="6.3.4.4"/>
    </reaction>
</comment>
<comment type="cofactor">
    <cofactor evidence="2">
        <name>Mg(2+)</name>
        <dbReference type="ChEBI" id="CHEBI:18420"/>
    </cofactor>
    <text evidence="2">Binds 1 Mg(2+) ion per subunit.</text>
</comment>
<comment type="pathway">
    <text evidence="2">Purine metabolism; AMP biosynthesis via de novo pathway; AMP from IMP: step 1/2.</text>
</comment>
<comment type="subunit">
    <text evidence="2">Homodimer.</text>
</comment>
<comment type="subcellular location">
    <subcellularLocation>
        <location evidence="2">Cytoplasm</location>
    </subcellularLocation>
</comment>
<comment type="miscellaneous">
    <text>Parasitic protozoa lack the de novo purine biosynthesis pathway and rely exclusively on the salvage pathway for their purine nucleotide requirements.</text>
</comment>
<comment type="similarity">
    <text evidence="2">Belongs to the adenylosuccinate synthetase family.</text>
</comment>
<keyword id="KW-0963">Cytoplasm</keyword>
<keyword id="KW-0342">GTP-binding</keyword>
<keyword id="KW-0436">Ligase</keyword>
<keyword id="KW-0460">Magnesium</keyword>
<keyword id="KW-0479">Metal-binding</keyword>
<keyword id="KW-0547">Nucleotide-binding</keyword>
<keyword id="KW-0658">Purine biosynthesis</keyword>
<keyword id="KW-1185">Reference proteome</keyword>
<gene>
    <name type="ORF">LmjF13.1190</name>
    <name type="ORF">LmjF_13_1190</name>
</gene>